<sequence>MDFSQRFGVIVIGGGHAGTEAALASARMGVSTLLLTHNIETLGQMSCNPAIGGIGKSHLVREIDALGGAMGRATDKGGIQFRVLNARKGPAVRATRAQADRELYKAAIRGTLENQPNLTLFQQAVDDLVVENGRCVGVVTNMGLRFMADAVVLTAGTFLGGVIHIGLDNHQGGRAGDQPSNALACRLRELPFRVDRLKTGTPPRIDGKSVDFSVMEEQWGDNPLPVMSYLGKVEEHPQQVCCYITHTNAQTHDIIRSGFDRSPMFTGVIDGVGPRYCPSIEDKVNRYPDKDSHQIFVEPEGLNTHELYPNGISTSLPFDVQLQAVRSIRGFENAHITRPGYAIEYDYFNPQDLKHSLETQHMPGLFFAGQINGTTGYEEAGAQGLLAGLNAARLSQGKDAWTPRRDEAYIGVLVDDLITMGTQEPYRMFTSRAEYRLLLREDNADLRLTEKGRELGLVGDERWAAFNAKRDGMASEEQRLKTTWVRPKTPEAEAVNALIEKPLTHEYNLLDLLKRPELTYANLAEAVALADRPDSAVIEQMEILAKYAGYIDRQADEIEKLRAAETTALPVEFDYGQVKGLSNEVKQKLSEIRPQTLGQAGRIPGVTPAAISLLMIYLKKHHHQKKAAQQA</sequence>
<proteinExistence type="inferred from homology"/>
<evidence type="ECO:0000255" key="1">
    <source>
        <dbReference type="HAMAP-Rule" id="MF_00129"/>
    </source>
</evidence>
<reference key="1">
    <citation type="journal article" date="2006" name="Nat. Biotechnol.">
        <title>Genome sequence of the ubiquitous hydrocarbon-degrading marine bacterium Alcanivorax borkumensis.</title>
        <authorList>
            <person name="Schneiker S."/>
            <person name="Martins dos Santos V.A.P."/>
            <person name="Bartels D."/>
            <person name="Bekel T."/>
            <person name="Brecht M."/>
            <person name="Buhrmester J."/>
            <person name="Chernikova T.N."/>
            <person name="Denaro R."/>
            <person name="Ferrer M."/>
            <person name="Gertler C."/>
            <person name="Goesmann A."/>
            <person name="Golyshina O.V."/>
            <person name="Kaminski F."/>
            <person name="Khachane A.N."/>
            <person name="Lang S."/>
            <person name="Linke B."/>
            <person name="McHardy A.C."/>
            <person name="Meyer F."/>
            <person name="Nechitaylo T."/>
            <person name="Puehler A."/>
            <person name="Regenhardt D."/>
            <person name="Rupp O."/>
            <person name="Sabirova J.S."/>
            <person name="Selbitschka W."/>
            <person name="Yakimov M.M."/>
            <person name="Timmis K.N."/>
            <person name="Vorhoelter F.-J."/>
            <person name="Weidner S."/>
            <person name="Kaiser O."/>
            <person name="Golyshin P.N."/>
        </authorList>
    </citation>
    <scope>NUCLEOTIDE SEQUENCE [LARGE SCALE GENOMIC DNA]</scope>
    <source>
        <strain>ATCC 700651 / DSM 11573 / NCIMB 13689 / SK2</strain>
    </source>
</reference>
<accession>Q0VKW3</accession>
<protein>
    <recommendedName>
        <fullName evidence="1">tRNA uridine 5-carboxymethylaminomethyl modification enzyme MnmG</fullName>
    </recommendedName>
    <alternativeName>
        <fullName evidence="1">Glucose-inhibited division protein A</fullName>
    </alternativeName>
</protein>
<keyword id="KW-0963">Cytoplasm</keyword>
<keyword id="KW-0274">FAD</keyword>
<keyword id="KW-0285">Flavoprotein</keyword>
<keyword id="KW-0520">NAD</keyword>
<keyword id="KW-1185">Reference proteome</keyword>
<keyword id="KW-0819">tRNA processing</keyword>
<feature type="chain" id="PRO_1000016542" description="tRNA uridine 5-carboxymethylaminomethyl modification enzyme MnmG">
    <location>
        <begin position="1"/>
        <end position="631"/>
    </location>
</feature>
<feature type="binding site" evidence="1">
    <location>
        <begin position="13"/>
        <end position="18"/>
    </location>
    <ligand>
        <name>FAD</name>
        <dbReference type="ChEBI" id="CHEBI:57692"/>
    </ligand>
</feature>
<feature type="binding site" evidence="1">
    <location>
        <position position="125"/>
    </location>
    <ligand>
        <name>FAD</name>
        <dbReference type="ChEBI" id="CHEBI:57692"/>
    </ligand>
</feature>
<feature type="binding site" evidence="1">
    <location>
        <position position="180"/>
    </location>
    <ligand>
        <name>FAD</name>
        <dbReference type="ChEBI" id="CHEBI:57692"/>
    </ligand>
</feature>
<feature type="binding site" evidence="1">
    <location>
        <begin position="273"/>
        <end position="287"/>
    </location>
    <ligand>
        <name>NAD(+)</name>
        <dbReference type="ChEBI" id="CHEBI:57540"/>
    </ligand>
</feature>
<feature type="binding site" evidence="1">
    <location>
        <position position="370"/>
    </location>
    <ligand>
        <name>FAD</name>
        <dbReference type="ChEBI" id="CHEBI:57692"/>
    </ligand>
</feature>
<gene>
    <name evidence="1" type="primary">mnmG</name>
    <name evidence="1" type="synonym">gidA</name>
    <name type="ordered locus">ABO_2737</name>
</gene>
<dbReference type="EMBL" id="AM286690">
    <property type="protein sequence ID" value="CAL18185.1"/>
    <property type="molecule type" value="Genomic_DNA"/>
</dbReference>
<dbReference type="RefSeq" id="WP_011590007.1">
    <property type="nucleotide sequence ID" value="NC_008260.1"/>
</dbReference>
<dbReference type="SMR" id="Q0VKW3"/>
<dbReference type="STRING" id="393595.ABO_2737"/>
<dbReference type="KEGG" id="abo:ABO_2737"/>
<dbReference type="eggNOG" id="COG0445">
    <property type="taxonomic scope" value="Bacteria"/>
</dbReference>
<dbReference type="HOGENOM" id="CLU_007831_2_2_6"/>
<dbReference type="OrthoDB" id="9815560at2"/>
<dbReference type="Proteomes" id="UP000008871">
    <property type="component" value="Chromosome"/>
</dbReference>
<dbReference type="GO" id="GO:0005829">
    <property type="term" value="C:cytosol"/>
    <property type="evidence" value="ECO:0007669"/>
    <property type="project" value="TreeGrafter"/>
</dbReference>
<dbReference type="GO" id="GO:0050660">
    <property type="term" value="F:flavin adenine dinucleotide binding"/>
    <property type="evidence" value="ECO:0007669"/>
    <property type="project" value="UniProtKB-UniRule"/>
</dbReference>
<dbReference type="GO" id="GO:0030488">
    <property type="term" value="P:tRNA methylation"/>
    <property type="evidence" value="ECO:0007669"/>
    <property type="project" value="TreeGrafter"/>
</dbReference>
<dbReference type="GO" id="GO:0002098">
    <property type="term" value="P:tRNA wobble uridine modification"/>
    <property type="evidence" value="ECO:0007669"/>
    <property type="project" value="InterPro"/>
</dbReference>
<dbReference type="FunFam" id="1.10.10.1800:FF:000001">
    <property type="entry name" value="tRNA uridine 5-carboxymethylaminomethyl modification enzyme MnmG"/>
    <property type="match status" value="1"/>
</dbReference>
<dbReference type="FunFam" id="1.10.150.570:FF:000001">
    <property type="entry name" value="tRNA uridine 5-carboxymethylaminomethyl modification enzyme MnmG"/>
    <property type="match status" value="1"/>
</dbReference>
<dbReference type="FunFam" id="3.50.50.60:FF:000002">
    <property type="entry name" value="tRNA uridine 5-carboxymethylaminomethyl modification enzyme MnmG"/>
    <property type="match status" value="1"/>
</dbReference>
<dbReference type="FunFam" id="3.50.50.60:FF:000010">
    <property type="entry name" value="tRNA uridine 5-carboxymethylaminomethyl modification enzyme MnmG"/>
    <property type="match status" value="1"/>
</dbReference>
<dbReference type="Gene3D" id="3.50.50.60">
    <property type="entry name" value="FAD/NAD(P)-binding domain"/>
    <property type="match status" value="2"/>
</dbReference>
<dbReference type="Gene3D" id="1.10.150.570">
    <property type="entry name" value="GidA associated domain, C-terminal subdomain"/>
    <property type="match status" value="1"/>
</dbReference>
<dbReference type="Gene3D" id="1.10.10.1800">
    <property type="entry name" value="tRNA uridine 5-carboxymethylaminomethyl modification enzyme MnmG/GidA"/>
    <property type="match status" value="1"/>
</dbReference>
<dbReference type="HAMAP" id="MF_00129">
    <property type="entry name" value="MnmG_GidA"/>
    <property type="match status" value="1"/>
</dbReference>
<dbReference type="InterPro" id="IPR036188">
    <property type="entry name" value="FAD/NAD-bd_sf"/>
</dbReference>
<dbReference type="InterPro" id="IPR049312">
    <property type="entry name" value="GIDA_C_N"/>
</dbReference>
<dbReference type="InterPro" id="IPR004416">
    <property type="entry name" value="MnmG"/>
</dbReference>
<dbReference type="InterPro" id="IPR002218">
    <property type="entry name" value="MnmG-rel"/>
</dbReference>
<dbReference type="InterPro" id="IPR020595">
    <property type="entry name" value="MnmG-rel_CS"/>
</dbReference>
<dbReference type="InterPro" id="IPR026904">
    <property type="entry name" value="MnmG_C"/>
</dbReference>
<dbReference type="InterPro" id="IPR047001">
    <property type="entry name" value="MnmG_C_subdom"/>
</dbReference>
<dbReference type="InterPro" id="IPR044920">
    <property type="entry name" value="MnmG_C_subdom_sf"/>
</dbReference>
<dbReference type="InterPro" id="IPR040131">
    <property type="entry name" value="MnmG_N"/>
</dbReference>
<dbReference type="NCBIfam" id="TIGR00136">
    <property type="entry name" value="mnmG_gidA"/>
    <property type="match status" value="1"/>
</dbReference>
<dbReference type="PANTHER" id="PTHR11806">
    <property type="entry name" value="GLUCOSE INHIBITED DIVISION PROTEIN A"/>
    <property type="match status" value="1"/>
</dbReference>
<dbReference type="PANTHER" id="PTHR11806:SF0">
    <property type="entry name" value="PROTEIN MTO1 HOMOLOG, MITOCHONDRIAL"/>
    <property type="match status" value="1"/>
</dbReference>
<dbReference type="Pfam" id="PF01134">
    <property type="entry name" value="GIDA"/>
    <property type="match status" value="1"/>
</dbReference>
<dbReference type="Pfam" id="PF21680">
    <property type="entry name" value="GIDA_C_1st"/>
    <property type="match status" value="1"/>
</dbReference>
<dbReference type="Pfam" id="PF13932">
    <property type="entry name" value="SAM_GIDA_C"/>
    <property type="match status" value="1"/>
</dbReference>
<dbReference type="PRINTS" id="PR00411">
    <property type="entry name" value="PNDRDTASEI"/>
</dbReference>
<dbReference type="SMART" id="SM01228">
    <property type="entry name" value="GIDA_assoc_3"/>
    <property type="match status" value="1"/>
</dbReference>
<dbReference type="SUPFAM" id="SSF51905">
    <property type="entry name" value="FAD/NAD(P)-binding domain"/>
    <property type="match status" value="1"/>
</dbReference>
<dbReference type="PROSITE" id="PS01280">
    <property type="entry name" value="GIDA_1"/>
    <property type="match status" value="1"/>
</dbReference>
<dbReference type="PROSITE" id="PS01281">
    <property type="entry name" value="GIDA_2"/>
    <property type="match status" value="1"/>
</dbReference>
<name>MNMG_ALCBS</name>
<comment type="function">
    <text evidence="1">NAD-binding protein involved in the addition of a carboxymethylaminomethyl (cmnm) group at the wobble position (U34) of certain tRNAs, forming tRNA-cmnm(5)s(2)U34.</text>
</comment>
<comment type="cofactor">
    <cofactor evidence="1">
        <name>FAD</name>
        <dbReference type="ChEBI" id="CHEBI:57692"/>
    </cofactor>
</comment>
<comment type="subunit">
    <text evidence="1">Homodimer. Heterotetramer of two MnmE and two MnmG subunits.</text>
</comment>
<comment type="subcellular location">
    <subcellularLocation>
        <location evidence="1">Cytoplasm</location>
    </subcellularLocation>
</comment>
<comment type="similarity">
    <text evidence="1">Belongs to the MnmG family.</text>
</comment>
<organism>
    <name type="scientific">Alcanivorax borkumensis (strain ATCC 700651 / DSM 11573 / NCIMB 13689 / SK2)</name>
    <dbReference type="NCBI Taxonomy" id="393595"/>
    <lineage>
        <taxon>Bacteria</taxon>
        <taxon>Pseudomonadati</taxon>
        <taxon>Pseudomonadota</taxon>
        <taxon>Gammaproteobacteria</taxon>
        <taxon>Oceanospirillales</taxon>
        <taxon>Alcanivoracaceae</taxon>
        <taxon>Alcanivorax</taxon>
    </lineage>
</organism>